<protein>
    <recommendedName>
        <fullName>Histone-lysine N-methyltransferase set-1</fullName>
        <ecNumber evidence="2 6">2.1.1.361</ecNumber>
    </recommendedName>
</protein>
<name>KMT5A_CAEEL</name>
<sequence>MKVAAKKLATSRMRKDRAAAASPSSDIENSENPSSLASHSSSSGRMTPSKNTRSRKGVSVKDVSNHKITEFFQVRRSNRKTSKQISDEAKHALRDTVLKGTNERLLEVYKDVVKGRGIRTKVNFEKGDFVVEYRGVMMEYSEAKVIEEQYSNDEEIGSYMYFFEHNNKKWCIDATKESPWKGRLINHSVLRPNLKTKVVEIDGSHHLILVARRQIAQGEELLYDYGDRSAETIAKNPWLVNT</sequence>
<accession>Q22795</accession>
<dbReference type="EC" id="2.1.1.361" evidence="2 6"/>
<dbReference type="EMBL" id="FO080366">
    <property type="protein sequence ID" value="CCD63213.1"/>
    <property type="molecule type" value="Genomic_DNA"/>
</dbReference>
<dbReference type="PIR" id="T34384">
    <property type="entry name" value="T34384"/>
</dbReference>
<dbReference type="RefSeq" id="NP_001022796.1">
    <property type="nucleotide sequence ID" value="NM_001027625.4"/>
</dbReference>
<dbReference type="SMR" id="Q22795"/>
<dbReference type="BioGRID" id="41136">
    <property type="interactions" value="15"/>
</dbReference>
<dbReference type="FunCoup" id="Q22795">
    <property type="interactions" value="819"/>
</dbReference>
<dbReference type="IntAct" id="Q22795">
    <property type="interactions" value="12"/>
</dbReference>
<dbReference type="STRING" id="6239.T26A5.7a.1"/>
<dbReference type="PaxDb" id="6239-T26A5.7a"/>
<dbReference type="EnsemblMetazoa" id="T26A5.7a.1">
    <property type="protein sequence ID" value="T26A5.7a.1"/>
    <property type="gene ID" value="WBGene00004781"/>
</dbReference>
<dbReference type="GeneID" id="175918"/>
<dbReference type="KEGG" id="cel:CELE_T26A5.7"/>
<dbReference type="UCSC" id="T26A5.7b.1">
    <property type="organism name" value="c. elegans"/>
</dbReference>
<dbReference type="AGR" id="WB:WBGene00004781"/>
<dbReference type="CTD" id="175918"/>
<dbReference type="WormBase" id="T26A5.7a">
    <property type="protein sequence ID" value="CE19602"/>
    <property type="gene ID" value="WBGene00004781"/>
    <property type="gene designation" value="set-1"/>
</dbReference>
<dbReference type="eggNOG" id="KOG1085">
    <property type="taxonomic scope" value="Eukaryota"/>
</dbReference>
<dbReference type="GeneTree" id="ENSGT00940000163293"/>
<dbReference type="HOGENOM" id="CLU_047978_2_1_1"/>
<dbReference type="InParanoid" id="Q22795"/>
<dbReference type="OMA" id="NHSILRP"/>
<dbReference type="OrthoDB" id="5560686at2759"/>
<dbReference type="PhylomeDB" id="Q22795"/>
<dbReference type="Reactome" id="R-CEL-2299718">
    <property type="pathway name" value="Condensation of Prophase Chromosomes"/>
</dbReference>
<dbReference type="Reactome" id="R-CEL-3214841">
    <property type="pathway name" value="PKMTs methylate histone lysines"/>
</dbReference>
<dbReference type="PRO" id="PR:Q22795"/>
<dbReference type="Proteomes" id="UP000001940">
    <property type="component" value="Chromosome III"/>
</dbReference>
<dbReference type="Bgee" id="WBGene00004781">
    <property type="expression patterns" value="Expressed in embryo and 9 other cell types or tissues"/>
</dbReference>
<dbReference type="ExpressionAtlas" id="Q22795">
    <property type="expression patterns" value="baseline and differential"/>
</dbReference>
<dbReference type="GO" id="GO:0005634">
    <property type="term" value="C:nucleus"/>
    <property type="evidence" value="ECO:0000314"/>
    <property type="project" value="WormBase"/>
</dbReference>
<dbReference type="GO" id="GO:0005700">
    <property type="term" value="C:polytene chromosome"/>
    <property type="evidence" value="ECO:0000318"/>
    <property type="project" value="GO_Central"/>
</dbReference>
<dbReference type="GO" id="GO:0048188">
    <property type="term" value="C:Set1C/COMPASS complex"/>
    <property type="evidence" value="ECO:0000250"/>
    <property type="project" value="UniProtKB"/>
</dbReference>
<dbReference type="GO" id="GO:0042799">
    <property type="term" value="F:histone H4K20 methyltransferase activity"/>
    <property type="evidence" value="ECO:0000318"/>
    <property type="project" value="GO_Central"/>
</dbReference>
<dbReference type="GO" id="GO:0140944">
    <property type="term" value="F:histone H4K20 monomethyltransferase activity"/>
    <property type="evidence" value="ECO:0000315"/>
    <property type="project" value="WormBase"/>
</dbReference>
<dbReference type="GO" id="GO:0003723">
    <property type="term" value="F:RNA binding"/>
    <property type="evidence" value="ECO:0000250"/>
    <property type="project" value="UniProtKB"/>
</dbReference>
<dbReference type="GO" id="GO:0009792">
    <property type="term" value="P:embryo development ending in birth or egg hatching"/>
    <property type="evidence" value="ECO:0000315"/>
    <property type="project" value="WormBase"/>
</dbReference>
<dbReference type="GO" id="GO:0032259">
    <property type="term" value="P:methylation"/>
    <property type="evidence" value="ECO:0007669"/>
    <property type="project" value="UniProtKB-KW"/>
</dbReference>
<dbReference type="GO" id="GO:0043516">
    <property type="term" value="P:regulation of DNA damage response, signal transduction by p53 class mediator"/>
    <property type="evidence" value="ECO:0000318"/>
    <property type="project" value="GO_Central"/>
</dbReference>
<dbReference type="GO" id="GO:0006357">
    <property type="term" value="P:regulation of transcription by RNA polymerase II"/>
    <property type="evidence" value="ECO:0000318"/>
    <property type="project" value="GO_Central"/>
</dbReference>
<dbReference type="CDD" id="cd10528">
    <property type="entry name" value="SET_SETD8"/>
    <property type="match status" value="1"/>
</dbReference>
<dbReference type="Gene3D" id="2.170.270.10">
    <property type="entry name" value="SET domain"/>
    <property type="match status" value="1"/>
</dbReference>
<dbReference type="InterPro" id="IPR051760">
    <property type="entry name" value="KMT5A"/>
</dbReference>
<dbReference type="InterPro" id="IPR016858">
    <property type="entry name" value="KMT5A-like"/>
</dbReference>
<dbReference type="InterPro" id="IPR047266">
    <property type="entry name" value="KMT5A-like_SET"/>
</dbReference>
<dbReference type="InterPro" id="IPR001214">
    <property type="entry name" value="SET_dom"/>
</dbReference>
<dbReference type="InterPro" id="IPR046341">
    <property type="entry name" value="SET_dom_sf"/>
</dbReference>
<dbReference type="PANTHER" id="PTHR46167">
    <property type="entry name" value="N-LYSINE METHYLTRANSFERASE KMT5A"/>
    <property type="match status" value="1"/>
</dbReference>
<dbReference type="PANTHER" id="PTHR46167:SF1">
    <property type="entry name" value="N-LYSINE METHYLTRANSFERASE KMT5A"/>
    <property type="match status" value="1"/>
</dbReference>
<dbReference type="Pfam" id="PF00856">
    <property type="entry name" value="SET"/>
    <property type="match status" value="1"/>
</dbReference>
<dbReference type="PIRSF" id="PIRSF027717">
    <property type="entry name" value="Histone_H4-K20_mtfrase"/>
    <property type="match status" value="1"/>
</dbReference>
<dbReference type="SMART" id="SM00317">
    <property type="entry name" value="SET"/>
    <property type="match status" value="1"/>
</dbReference>
<dbReference type="SUPFAM" id="SSF82199">
    <property type="entry name" value="SET domain"/>
    <property type="match status" value="1"/>
</dbReference>
<dbReference type="PROSITE" id="PS51571">
    <property type="entry name" value="SAM_MT43_PR_SET"/>
    <property type="match status" value="1"/>
</dbReference>
<dbReference type="PROSITE" id="PS50280">
    <property type="entry name" value="SET"/>
    <property type="match status" value="1"/>
</dbReference>
<reference key="1">
    <citation type="journal article" date="1998" name="Science">
        <title>Genome sequence of the nematode C. elegans: a platform for investigating biology.</title>
        <authorList>
            <consortium name="The C. elegans sequencing consortium"/>
        </authorList>
    </citation>
    <scope>NUCLEOTIDE SEQUENCE [LARGE SCALE GENOMIC DNA]</scope>
    <source>
        <strain>Bristol N2</strain>
    </source>
</reference>
<reference key="2">
    <citation type="journal article" date="2002" name="Gene">
        <title>Characterisation of set-1, a conserved PR/SET domain gene in Caenorhabditis elegans.</title>
        <authorList>
            <person name="Terranova R."/>
            <person name="Pujol N."/>
            <person name="Fasano L."/>
            <person name="Djabali M."/>
        </authorList>
    </citation>
    <scope>SUBCELLULAR LOCATION</scope>
    <scope>TISSUE SPECIFICITY</scope>
    <scope>DEVELOPMENTAL STAGE</scope>
</reference>
<reference key="3">
    <citation type="journal article" date="2012" name="Mol. Cell. Biol.">
        <title>Caenorhabditis elegans dosage compensation regulates histone H4 chromatin state on X chromosomes.</title>
        <authorList>
            <person name="Wells M.B."/>
            <person name="Snyder M.J."/>
            <person name="Custer L.M."/>
            <person name="Csankovszki G."/>
        </authorList>
    </citation>
    <scope>FUNCTION</scope>
    <scope>DISRUPTION PHENOTYPE</scope>
</reference>
<reference key="4">
    <citation type="journal article" date="2012" name="PLoS Genet.">
        <title>H4K20me1 contributes to downregulation of X-linked genes for C. elegans dosage compensation.</title>
        <authorList>
            <person name="Vielle A."/>
            <person name="Lang J."/>
            <person name="Dong Y."/>
            <person name="Ercan S."/>
            <person name="Kotwaliwale C."/>
            <person name="Rechtsteiner A."/>
            <person name="Appert A."/>
            <person name="Chen Q.B."/>
            <person name="Dose A."/>
            <person name="Egelhofer T."/>
            <person name="Kimura H."/>
            <person name="Stempor P."/>
            <person name="Dernburg A."/>
            <person name="Lieb J.D."/>
            <person name="Strome S."/>
            <person name="Ahringer J."/>
        </authorList>
    </citation>
    <scope>FUNCTION</scope>
    <scope>CATALYTIC ACTIVITY</scope>
    <scope>SUBCELLULAR LOCATION</scope>
    <scope>DISRUPTION PHENOTYPE</scope>
</reference>
<reference key="5">
    <citation type="journal article" date="2013" name="Development">
        <title>A non-canonical role for the C. elegans dosage compensation complex in growth and metabolic regulation downstream of TOR complex 2.</title>
        <authorList>
            <person name="Webster C.M."/>
            <person name="Wu L."/>
            <person name="Douglas D."/>
            <person name="Soukas A.A."/>
        </authorList>
    </citation>
    <scope>FUNCTION</scope>
    <scope>DISRUPTION PHENOTYPE</scope>
</reference>
<reference key="6">
    <citation type="journal article" date="2017" name="Cell">
        <title>Dynamic Control of X Chromosome Conformation and Repression by a Histone H4K20 Demethylase.</title>
        <authorList>
            <person name="Brejc K."/>
            <person name="Bian Q."/>
            <person name="Uzawa S."/>
            <person name="Wheeler B.S."/>
            <person name="Anderson E.C."/>
            <person name="King D.S."/>
            <person name="Kranzusch P.J."/>
            <person name="Preston C.G."/>
            <person name="Meyer B.J."/>
        </authorList>
    </citation>
    <scope>DISRUPTION PHENOTYPE</scope>
</reference>
<organism>
    <name type="scientific">Caenorhabditis elegans</name>
    <dbReference type="NCBI Taxonomy" id="6239"/>
    <lineage>
        <taxon>Eukaryota</taxon>
        <taxon>Metazoa</taxon>
        <taxon>Ecdysozoa</taxon>
        <taxon>Nematoda</taxon>
        <taxon>Chromadorea</taxon>
        <taxon>Rhabditida</taxon>
        <taxon>Rhabditina</taxon>
        <taxon>Rhabditomorpha</taxon>
        <taxon>Rhabditoidea</taxon>
        <taxon>Rhabditidae</taxon>
        <taxon>Peloderinae</taxon>
        <taxon>Caenorhabditis</taxon>
    </lineage>
</organism>
<comment type="function">
    <text evidence="5 6 7">Histone methyltransferase that specifically monomethylates 'Lys-20' of histone H4 (H4K20me1) (PubMed:23028348). H4K20me1 is enriched on hermaphrodite X chromosomes and during mitosis (PubMed:22393255, PubMed:23028348). Involved in dosage compensation by repression of X-linked gene expression in hermaphrodites (PubMed:23028348). Plays a role in growth and body fat regulation downstream of the TOR complex 2 pathway (PubMed:23884442).</text>
</comment>
<comment type="catalytic activity">
    <reaction evidence="2 6">
        <text>L-lysyl(20)-[histone H4] + S-adenosyl-L-methionine = N(6)-methyl-L-lysyl(20)-[histone H4] + S-adenosyl-L-homocysteine + H(+)</text>
        <dbReference type="Rhea" id="RHEA:60344"/>
        <dbReference type="Rhea" id="RHEA-COMP:15554"/>
        <dbReference type="Rhea" id="RHEA-COMP:15555"/>
        <dbReference type="ChEBI" id="CHEBI:15378"/>
        <dbReference type="ChEBI" id="CHEBI:29969"/>
        <dbReference type="ChEBI" id="CHEBI:57856"/>
        <dbReference type="ChEBI" id="CHEBI:59789"/>
        <dbReference type="ChEBI" id="CHEBI:61929"/>
        <dbReference type="EC" id="2.1.1.361"/>
    </reaction>
</comment>
<comment type="subcellular location">
    <subcellularLocation>
        <location evidence="4">Nucleus</location>
    </subcellularLocation>
    <subcellularLocation>
        <location evidence="9">Chromosome</location>
    </subcellularLocation>
</comment>
<comment type="tissue specificity">
    <text evidence="4">In embryos, it is expressed ubiquitously. In late embryos, it is expressed in hypodermal seam cells. In L3 and L4 larvae and thereafter, it is expressed in vulval precursor cells. In adult males, it is also expressed in 6 unidentified posterior cells.</text>
</comment>
<comment type="developmental stage">
    <text evidence="4">Highly expressed in eggs, then decreases.</text>
</comment>
<comment type="disruption phenotype">
    <text evidence="5 6 7 8">Mutant animals lack methylation of 'Lys-20' of histone H4 (H4K20me) (PubMed:23028348). In a glp-1(e2141) mutant background which lacks a germline, the X-linked genes aco-1, ajm-1 and apl-1 are up-regulated (PubMed:23028348). RNAi-mediated knockdown leads to embryonic lethality in a mutant background of the dosage compensation proteins dpy-21 or dpy-28 (PubMed:23028348). Increases 'Lys-16' acetylation of histone H4 on hermaphrodite X chromosomes (PubMed:22393255). In the TOR complex 2 mutant background rict-1, suppresses the growth delay and elevated body fat index (PubMed:23884442). Causes mitotic chromosome segregation defects and chromosome bridges resulting in delayed or arrested embryonic development and embryonic lethality (PubMed:28867287).</text>
</comment>
<comment type="similarity">
    <text evidence="2">Belongs to the class V-like SAM-binding methyltransferase superfamily. Histone-lysine methyltransferase family. PR/SET subfamily.</text>
</comment>
<gene>
    <name type="primary">set-1</name>
    <name type="ORF">T26A5.7</name>
</gene>
<keyword id="KW-0156">Chromatin regulator</keyword>
<keyword id="KW-0158">Chromosome</keyword>
<keyword id="KW-0489">Methyltransferase</keyword>
<keyword id="KW-0539">Nucleus</keyword>
<keyword id="KW-1185">Reference proteome</keyword>
<keyword id="KW-0949">S-adenosyl-L-methionine</keyword>
<keyword id="KW-0804">Transcription</keyword>
<keyword id="KW-0805">Transcription regulation</keyword>
<keyword id="KW-0808">Transferase</keyword>
<evidence type="ECO:0000255" key="1">
    <source>
        <dbReference type="PROSITE-ProRule" id="PRU00190"/>
    </source>
</evidence>
<evidence type="ECO:0000255" key="2">
    <source>
        <dbReference type="PROSITE-ProRule" id="PRU00904"/>
    </source>
</evidence>
<evidence type="ECO:0000256" key="3">
    <source>
        <dbReference type="SAM" id="MobiDB-lite"/>
    </source>
</evidence>
<evidence type="ECO:0000269" key="4">
    <source>
    </source>
</evidence>
<evidence type="ECO:0000269" key="5">
    <source>
    </source>
</evidence>
<evidence type="ECO:0000269" key="6">
    <source>
    </source>
</evidence>
<evidence type="ECO:0000269" key="7">
    <source>
    </source>
</evidence>
<evidence type="ECO:0000269" key="8">
    <source>
    </source>
</evidence>
<evidence type="ECO:0000305" key="9">
    <source>
    </source>
</evidence>
<proteinExistence type="evidence at protein level"/>
<feature type="chain" id="PRO_0000097694" description="Histone-lysine N-methyltransferase set-1">
    <location>
        <begin position="1"/>
        <end position="242"/>
    </location>
</feature>
<feature type="domain" description="SET" evidence="1">
    <location>
        <begin position="104"/>
        <end position="226"/>
    </location>
</feature>
<feature type="region of interest" description="Disordered" evidence="3">
    <location>
        <begin position="1"/>
        <end position="61"/>
    </location>
</feature>
<feature type="compositionally biased region" description="Low complexity" evidence="3">
    <location>
        <begin position="30"/>
        <end position="43"/>
    </location>
</feature>
<feature type="binding site" evidence="2">
    <location>
        <begin position="114"/>
        <end position="116"/>
    </location>
    <ligand>
        <name>S-adenosyl-L-methionine</name>
        <dbReference type="ChEBI" id="CHEBI:59789"/>
    </ligand>
</feature>
<feature type="binding site" evidence="1 2">
    <location>
        <position position="159"/>
    </location>
    <ligand>
        <name>S-adenosyl-L-methionine</name>
        <dbReference type="ChEBI" id="CHEBI:59789"/>
    </ligand>
</feature>
<feature type="binding site" evidence="2">
    <location>
        <begin position="186"/>
        <end position="187"/>
    </location>
    <ligand>
        <name>S-adenosyl-L-methionine</name>
        <dbReference type="ChEBI" id="CHEBI:59789"/>
    </ligand>
</feature>